<feature type="chain" id="PRO_1000089242" description="UPF0060 membrane protein YnfA">
    <location>
        <begin position="1"/>
        <end position="108"/>
    </location>
</feature>
<feature type="topological domain" description="Periplasmic" evidence="1">
    <location>
        <begin position="1"/>
        <end position="5"/>
    </location>
</feature>
<feature type="transmembrane region" description="Helical" evidence="1">
    <location>
        <begin position="6"/>
        <end position="26"/>
    </location>
</feature>
<feature type="topological domain" description="Cytoplasmic" evidence="1">
    <location>
        <begin position="27"/>
        <end position="30"/>
    </location>
</feature>
<feature type="transmembrane region" description="Helical" evidence="1">
    <location>
        <begin position="31"/>
        <end position="51"/>
    </location>
</feature>
<feature type="topological domain" description="Periplasmic" evidence="1">
    <location>
        <begin position="52"/>
        <end position="60"/>
    </location>
</feature>
<feature type="transmembrane region" description="Helical" evidence="1">
    <location>
        <begin position="61"/>
        <end position="81"/>
    </location>
</feature>
<feature type="topological domain" description="Cytoplasmic" evidence="1">
    <location>
        <begin position="82"/>
        <end position="84"/>
    </location>
</feature>
<feature type="transmembrane region" description="Helical" evidence="1">
    <location>
        <begin position="85"/>
        <end position="105"/>
    </location>
</feature>
<feature type="topological domain" description="Periplasmic" evidence="1">
    <location>
        <begin position="106"/>
        <end position="108"/>
    </location>
</feature>
<evidence type="ECO:0000255" key="1">
    <source>
        <dbReference type="HAMAP-Rule" id="MF_00010"/>
    </source>
</evidence>
<accession>B1XF47</accession>
<sequence length="108" mass="11920">MIKTTLLFFATALCEIIGCFLPWLWLKRNASIWLLLPAGISLALFVWLLTLHPAASGRVYAAYGGVYVCTALMWLRVVDGVKLTLYDWTGALIALCGMLIIVAGWGRT</sequence>
<name>YNFA_ECODH</name>
<comment type="subcellular location">
    <subcellularLocation>
        <location evidence="1">Cell inner membrane</location>
        <topology evidence="1">Multi-pass membrane protein</topology>
    </subcellularLocation>
</comment>
<comment type="similarity">
    <text evidence="1">Belongs to the UPF0060 family.</text>
</comment>
<reference key="1">
    <citation type="journal article" date="2008" name="J. Bacteriol.">
        <title>The complete genome sequence of Escherichia coli DH10B: insights into the biology of a laboratory workhorse.</title>
        <authorList>
            <person name="Durfee T."/>
            <person name="Nelson R."/>
            <person name="Baldwin S."/>
            <person name="Plunkett G. III"/>
            <person name="Burland V."/>
            <person name="Mau B."/>
            <person name="Petrosino J.F."/>
            <person name="Qin X."/>
            <person name="Muzny D.M."/>
            <person name="Ayele M."/>
            <person name="Gibbs R.A."/>
            <person name="Csorgo B."/>
            <person name="Posfai G."/>
            <person name="Weinstock G.M."/>
            <person name="Blattner F.R."/>
        </authorList>
    </citation>
    <scope>NUCLEOTIDE SEQUENCE [LARGE SCALE GENOMIC DNA]</scope>
    <source>
        <strain>K12 / DH10B</strain>
    </source>
</reference>
<dbReference type="EMBL" id="CP000948">
    <property type="protein sequence ID" value="ACB02788.1"/>
    <property type="molecule type" value="Genomic_DNA"/>
</dbReference>
<dbReference type="RefSeq" id="WP_000598292.1">
    <property type="nucleotide sequence ID" value="NC_010473.1"/>
</dbReference>
<dbReference type="SMR" id="B1XF47"/>
<dbReference type="KEGG" id="ecd:ECDH10B_1715"/>
<dbReference type="HOGENOM" id="CLU_117653_2_1_6"/>
<dbReference type="GO" id="GO:0005886">
    <property type="term" value="C:plasma membrane"/>
    <property type="evidence" value="ECO:0007669"/>
    <property type="project" value="UniProtKB-SubCell"/>
</dbReference>
<dbReference type="HAMAP" id="MF_00010">
    <property type="entry name" value="UPF0060"/>
    <property type="match status" value="1"/>
</dbReference>
<dbReference type="InterPro" id="IPR003844">
    <property type="entry name" value="UPF0060"/>
</dbReference>
<dbReference type="NCBIfam" id="NF002586">
    <property type="entry name" value="PRK02237.1"/>
    <property type="match status" value="1"/>
</dbReference>
<dbReference type="PANTHER" id="PTHR36116">
    <property type="entry name" value="UPF0060 MEMBRANE PROTEIN YNFA"/>
    <property type="match status" value="1"/>
</dbReference>
<dbReference type="PANTHER" id="PTHR36116:SF1">
    <property type="entry name" value="UPF0060 MEMBRANE PROTEIN YNFA"/>
    <property type="match status" value="1"/>
</dbReference>
<dbReference type="Pfam" id="PF02694">
    <property type="entry name" value="UPF0060"/>
    <property type="match status" value="1"/>
</dbReference>
<dbReference type="SUPFAM" id="SSF103481">
    <property type="entry name" value="Multidrug resistance efflux transporter EmrE"/>
    <property type="match status" value="1"/>
</dbReference>
<protein>
    <recommendedName>
        <fullName evidence="1">UPF0060 membrane protein YnfA</fullName>
    </recommendedName>
</protein>
<organism>
    <name type="scientific">Escherichia coli (strain K12 / DH10B)</name>
    <dbReference type="NCBI Taxonomy" id="316385"/>
    <lineage>
        <taxon>Bacteria</taxon>
        <taxon>Pseudomonadati</taxon>
        <taxon>Pseudomonadota</taxon>
        <taxon>Gammaproteobacteria</taxon>
        <taxon>Enterobacterales</taxon>
        <taxon>Enterobacteriaceae</taxon>
        <taxon>Escherichia</taxon>
    </lineage>
</organism>
<gene>
    <name evidence="1" type="primary">ynfA</name>
    <name type="ordered locus">ECDH10B_1715</name>
</gene>
<proteinExistence type="inferred from homology"/>
<keyword id="KW-0997">Cell inner membrane</keyword>
<keyword id="KW-1003">Cell membrane</keyword>
<keyword id="KW-0472">Membrane</keyword>
<keyword id="KW-0812">Transmembrane</keyword>
<keyword id="KW-1133">Transmembrane helix</keyword>